<dbReference type="EC" id="2.5.1.18" evidence="6"/>
<dbReference type="EMBL" id="CAGA01000011">
    <property type="protein sequence ID" value="CCE28985.1"/>
    <property type="molecule type" value="Genomic_DNA"/>
</dbReference>
<dbReference type="SMR" id="M1W426"/>
<dbReference type="STRING" id="1111077.M1W426"/>
<dbReference type="VEuPathDB" id="FungiDB:CPUR_02676"/>
<dbReference type="eggNOG" id="ENOG502SRT0">
    <property type="taxonomic scope" value="Eukaryota"/>
</dbReference>
<dbReference type="HOGENOM" id="CLU_011226_14_2_1"/>
<dbReference type="OrthoDB" id="2789670at2759"/>
<dbReference type="PhylomeDB" id="M1W426"/>
<dbReference type="Proteomes" id="UP000016801">
    <property type="component" value="Unassembled WGS sequence"/>
</dbReference>
<dbReference type="GO" id="GO:0004364">
    <property type="term" value="F:glutathione transferase activity"/>
    <property type="evidence" value="ECO:0007669"/>
    <property type="project" value="UniProtKB-EC"/>
</dbReference>
<dbReference type="Gene3D" id="1.20.1050.10">
    <property type="match status" value="1"/>
</dbReference>
<dbReference type="Gene3D" id="3.40.30.10">
    <property type="entry name" value="Glutaredoxin"/>
    <property type="match status" value="1"/>
</dbReference>
<dbReference type="InterPro" id="IPR010987">
    <property type="entry name" value="Glutathione-S-Trfase_C-like"/>
</dbReference>
<dbReference type="InterPro" id="IPR036282">
    <property type="entry name" value="Glutathione-S-Trfase_C_sf"/>
</dbReference>
<dbReference type="InterPro" id="IPR040079">
    <property type="entry name" value="Glutathione_S-Trfase"/>
</dbReference>
<dbReference type="InterPro" id="IPR004045">
    <property type="entry name" value="Glutathione_S-Trfase_N"/>
</dbReference>
<dbReference type="InterPro" id="IPR004046">
    <property type="entry name" value="GST_C"/>
</dbReference>
<dbReference type="InterPro" id="IPR036249">
    <property type="entry name" value="Thioredoxin-like_sf"/>
</dbReference>
<dbReference type="PANTHER" id="PTHR44051">
    <property type="entry name" value="GLUTATHIONE S-TRANSFERASE-RELATED"/>
    <property type="match status" value="1"/>
</dbReference>
<dbReference type="PANTHER" id="PTHR44051:SF20">
    <property type="entry name" value="GLUTATHIONE TRANSFERASE 1 (EUROFUNG)"/>
    <property type="match status" value="1"/>
</dbReference>
<dbReference type="Pfam" id="PF00043">
    <property type="entry name" value="GST_C"/>
    <property type="match status" value="1"/>
</dbReference>
<dbReference type="Pfam" id="PF13409">
    <property type="entry name" value="GST_N_2"/>
    <property type="match status" value="1"/>
</dbReference>
<dbReference type="SFLD" id="SFLDS00019">
    <property type="entry name" value="Glutathione_Transferase_(cytos"/>
    <property type="match status" value="1"/>
</dbReference>
<dbReference type="SUPFAM" id="SSF47616">
    <property type="entry name" value="GST C-terminal domain-like"/>
    <property type="match status" value="1"/>
</dbReference>
<dbReference type="SUPFAM" id="SSF52833">
    <property type="entry name" value="Thioredoxin-like"/>
    <property type="match status" value="1"/>
</dbReference>
<dbReference type="PROSITE" id="PS50405">
    <property type="entry name" value="GST_CTER"/>
    <property type="match status" value="1"/>
</dbReference>
<dbReference type="PROSITE" id="PS50404">
    <property type="entry name" value="GST_NTER"/>
    <property type="match status" value="1"/>
</dbReference>
<proteinExistence type="evidence at transcript level"/>
<comment type="function">
    <text evidence="3">Glutathione S-transferase; part of the gene cluster that mediates the biosynthesis of an unusual class of epipolythiodioxopiperazines (ETPs) lacking the reactive thiol group important for toxicity (PubMed:27390873). Firstly, L-tyrosine is prenylated by tcpD, before undergoing condensation with L-glycine in a reaction catalyzed by the NRPS tcpP leading to the diketopiperazine (DKP) backbone (PubMed:27390873). Afterwards the alpha-carbon of tyrosine is oxidized by the cytochrome P450 tcpC to form a hydroxyl group (PubMed:27390873). However, in contrast other ETP biosynthesis pathways studied so far, tcpC is not able to bishydroxylate the DKP at both alpha-carbon positions, but hydroxylates the alpha-carbon of the tyrosine part and the nitrogen of the glycine part (PubMed:27390873). The next steps involve an alpha,beta-elimination reaction catalyzed by tcpI, a methylation by the methyltransferase tcpN the action of the four enzyme cascade tcpG/K/J/I (PubMed:27390873). Due to a dysfunctional cytochrome P450 monooxygenase tcpC, the pathway leads to the biosynthesis of probable non-toxic metabolites lacking the reactive thiol group (PubMed:27390873).</text>
</comment>
<comment type="catalytic activity">
    <reaction evidence="6">
        <text>RX + glutathione = an S-substituted glutathione + a halide anion + H(+)</text>
        <dbReference type="Rhea" id="RHEA:16437"/>
        <dbReference type="ChEBI" id="CHEBI:15378"/>
        <dbReference type="ChEBI" id="CHEBI:16042"/>
        <dbReference type="ChEBI" id="CHEBI:17792"/>
        <dbReference type="ChEBI" id="CHEBI:57925"/>
        <dbReference type="ChEBI" id="CHEBI:90779"/>
        <dbReference type="EC" id="2.5.1.18"/>
    </reaction>
</comment>
<comment type="pathway">
    <text evidence="6">Secondary metabolite biosynthesis.</text>
</comment>
<comment type="induction">
    <text evidence="3">Expression is increases towards the late stages of rye plants infection (PubMed:27390873). Expression is positively regulated by the thioclapurine cluster-specific transcription factor tcpZ (PubMed:27390873).</text>
</comment>
<comment type="similarity">
    <text evidence="5">Belongs to the GST superfamily.</text>
</comment>
<feature type="chain" id="PRO_0000437726" description="Glutathione S-transferase tcpG">
    <location>
        <begin position="1"/>
        <end position="249"/>
    </location>
</feature>
<feature type="domain" description="GST N-terminal" evidence="1">
    <location>
        <begin position="20"/>
        <end position="109"/>
    </location>
</feature>
<feature type="domain" description="GST C-terminal" evidence="2">
    <location>
        <begin position="115"/>
        <end position="249"/>
    </location>
</feature>
<gene>
    <name evidence="4" type="primary">tcpG</name>
    <name type="ORF">CPUR_02676</name>
</gene>
<protein>
    <recommendedName>
        <fullName evidence="4">Glutathione S-transferase tcpG</fullName>
        <ecNumber evidence="6">2.5.1.18</ecNumber>
    </recommendedName>
    <alternativeName>
        <fullName evidence="4">Thioclapurine biosynthesis protein G</fullName>
    </alternativeName>
</protein>
<keyword id="KW-1185">Reference proteome</keyword>
<keyword id="KW-0808">Transferase</keyword>
<accession>M1W426</accession>
<organism>
    <name type="scientific">Claviceps purpurea (strain 20.1)</name>
    <name type="common">Ergot fungus</name>
    <name type="synonym">Sphacelia segetum</name>
    <dbReference type="NCBI Taxonomy" id="1111077"/>
    <lineage>
        <taxon>Eukaryota</taxon>
        <taxon>Fungi</taxon>
        <taxon>Dikarya</taxon>
        <taxon>Ascomycota</taxon>
        <taxon>Pezizomycotina</taxon>
        <taxon>Sordariomycetes</taxon>
        <taxon>Hypocreomycetidae</taxon>
        <taxon>Hypocreales</taxon>
        <taxon>Clavicipitaceae</taxon>
        <taxon>Claviceps</taxon>
    </lineage>
</organism>
<name>TCPG_CLAP2</name>
<evidence type="ECO:0000255" key="1">
    <source>
        <dbReference type="PROSITE-ProRule" id="PRU00684"/>
    </source>
</evidence>
<evidence type="ECO:0000255" key="2">
    <source>
        <dbReference type="PROSITE-ProRule" id="PRU00685"/>
    </source>
</evidence>
<evidence type="ECO:0000269" key="3">
    <source>
    </source>
</evidence>
<evidence type="ECO:0000303" key="4">
    <source>
    </source>
</evidence>
<evidence type="ECO:0000305" key="5"/>
<evidence type="ECO:0000305" key="6">
    <source>
    </source>
</evidence>
<sequence>MEAQQDFTKHPEVAQDRLVLYVRKAIPAPTANSLKPLMILEALEIPYSIHLISSLSQETWYHEINPYKQLPALEDIDLVETSGGSKRRLNVFDSSAMLIYLCDKHDKDGLFIGRNATERAQVTSWLIAYAAGLGATGEWWLKMRHDENLKPALRVIENAIRREYDILEKRLGEPGQRWIALADRPTVADFAIQPLANPRVARNAAIDFEAWPRTKAWSEAVDRLAYIDRAKRLNNKLGMTEEEIELHGR</sequence>
<reference key="1">
    <citation type="journal article" date="2013" name="PLoS Genet.">
        <title>Plant-symbiotic fungi as chemical engineers: Multi-genome analysis of the Clavicipitaceae reveals dynamics of alkaloid loci.</title>
        <authorList>
            <person name="Schardl C.L."/>
            <person name="Young C.A."/>
            <person name="Hesse U."/>
            <person name="Amyotte S.G."/>
            <person name="Andreeva K."/>
            <person name="Calie P.J."/>
            <person name="Fleetwood D.J."/>
            <person name="Haws D.C."/>
            <person name="Moore N."/>
            <person name="Oeser B."/>
            <person name="Panaccione D.G."/>
            <person name="Schweri K.K."/>
            <person name="Voisey C.R."/>
            <person name="Farman M.L."/>
            <person name="Jaromczyk J.W."/>
            <person name="Roe B.A."/>
            <person name="O'Sullivan D.M."/>
            <person name="Scott B."/>
            <person name="Tudzynski P."/>
            <person name="An Z."/>
            <person name="Arnaoudova E.G."/>
            <person name="Bullock C.T."/>
            <person name="Charlton N.D."/>
            <person name="Chen L."/>
            <person name="Cox M."/>
            <person name="Dinkins R.D."/>
            <person name="Florea S."/>
            <person name="Glenn A.E."/>
            <person name="Gordon A."/>
            <person name="Gueldener U."/>
            <person name="Harris D.R."/>
            <person name="Hollin W."/>
            <person name="Jaromczyk J."/>
            <person name="Johnson R.D."/>
            <person name="Khan A.K."/>
            <person name="Leistner E."/>
            <person name="Leuchtmann A."/>
            <person name="Li C."/>
            <person name="Liu J."/>
            <person name="Liu J."/>
            <person name="Liu M."/>
            <person name="Mace W."/>
            <person name="Machado C."/>
            <person name="Nagabhyru P."/>
            <person name="Pan J."/>
            <person name="Schmid J."/>
            <person name="Sugawara K."/>
            <person name="Steiner U."/>
            <person name="Takach J.E."/>
            <person name="Tanaka E."/>
            <person name="Webb J.S."/>
            <person name="Wilson E.V."/>
            <person name="Wiseman J.L."/>
            <person name="Yoshida R."/>
            <person name="Zeng Z."/>
        </authorList>
    </citation>
    <scope>NUCLEOTIDE SEQUENCE [LARGE SCALE GENOMIC DNA]</scope>
    <source>
        <strain>20.1</strain>
    </source>
</reference>
<reference key="2">
    <citation type="journal article" date="2016" name="PLoS ONE">
        <title>The epipolythiodiketopiperazine gene cluster in Claviceps purpurea: dysfunctional cytochrome P450 enzyme prevents formation of the previously unknown clapurines.</title>
        <authorList>
            <person name="Dopstadt J."/>
            <person name="Neubauer L."/>
            <person name="Tudzynski P."/>
            <person name="Humpf H.U."/>
        </authorList>
    </citation>
    <scope>FUNCTION</scope>
    <scope>INDUCTION</scope>
</reference>